<protein>
    <recommendedName>
        <fullName evidence="1">ATP synthase epsilon chain</fullName>
    </recommendedName>
    <alternativeName>
        <fullName evidence="1">ATP synthase F1 sector epsilon subunit</fullName>
    </alternativeName>
    <alternativeName>
        <fullName evidence="1">F-ATPase epsilon subunit</fullName>
    </alternativeName>
</protein>
<organism>
    <name type="scientific">Legionella pneumophila (strain Corby)</name>
    <dbReference type="NCBI Taxonomy" id="400673"/>
    <lineage>
        <taxon>Bacteria</taxon>
        <taxon>Pseudomonadati</taxon>
        <taxon>Pseudomonadota</taxon>
        <taxon>Gammaproteobacteria</taxon>
        <taxon>Legionellales</taxon>
        <taxon>Legionellaceae</taxon>
        <taxon>Legionella</taxon>
    </lineage>
</organism>
<reference key="1">
    <citation type="submission" date="2006-11" db="EMBL/GenBank/DDBJ databases">
        <title>Identification and characterization of a new conjugation/ type IVA secretion system (trb/tra) of L. pneumophila Corby localized on a mobile genomic island.</title>
        <authorList>
            <person name="Gloeckner G."/>
            <person name="Albert-Weissenberger C."/>
            <person name="Weinmann E."/>
            <person name="Jacobi S."/>
            <person name="Schunder E."/>
            <person name="Steinert M."/>
            <person name="Buchrieser C."/>
            <person name="Hacker J."/>
            <person name="Heuner K."/>
        </authorList>
    </citation>
    <scope>NUCLEOTIDE SEQUENCE [LARGE SCALE GENOMIC DNA]</scope>
    <source>
        <strain>Corby</strain>
    </source>
</reference>
<name>ATPE_LEGPC</name>
<gene>
    <name evidence="1" type="primary">atpC</name>
    <name type="ordered locus">LPC_3296</name>
</gene>
<comment type="function">
    <text evidence="1">Produces ATP from ADP in the presence of a proton gradient across the membrane.</text>
</comment>
<comment type="subunit">
    <text evidence="1">F-type ATPases have 2 components, CF(1) - the catalytic core - and CF(0) - the membrane proton channel. CF(1) has five subunits: alpha(3), beta(3), gamma(1), delta(1), epsilon(1). CF(0) has three main subunits: a, b and c.</text>
</comment>
<comment type="subcellular location">
    <subcellularLocation>
        <location evidence="1">Cell inner membrane</location>
        <topology evidence="1">Peripheral membrane protein</topology>
    </subcellularLocation>
</comment>
<comment type="similarity">
    <text evidence="1">Belongs to the ATPase epsilon chain family.</text>
</comment>
<proteinExistence type="inferred from homology"/>
<evidence type="ECO:0000255" key="1">
    <source>
        <dbReference type="HAMAP-Rule" id="MF_00530"/>
    </source>
</evidence>
<accession>A5III2</accession>
<keyword id="KW-0066">ATP synthesis</keyword>
<keyword id="KW-0997">Cell inner membrane</keyword>
<keyword id="KW-1003">Cell membrane</keyword>
<keyword id="KW-0139">CF(1)</keyword>
<keyword id="KW-0375">Hydrogen ion transport</keyword>
<keyword id="KW-0406">Ion transport</keyword>
<keyword id="KW-0472">Membrane</keyword>
<keyword id="KW-0813">Transport</keyword>
<feature type="chain" id="PRO_1000056498" description="ATP synthase epsilon chain">
    <location>
        <begin position="1"/>
        <end position="140"/>
    </location>
</feature>
<dbReference type="EMBL" id="CP000675">
    <property type="protein sequence ID" value="ABQ57182.1"/>
    <property type="molecule type" value="Genomic_DNA"/>
</dbReference>
<dbReference type="RefSeq" id="WP_010948665.1">
    <property type="nucleotide sequence ID" value="NZ_JAPMSS010000003.1"/>
</dbReference>
<dbReference type="SMR" id="A5III2"/>
<dbReference type="KEGG" id="lpc:LPC_3296"/>
<dbReference type="HOGENOM" id="CLU_084338_2_0_6"/>
<dbReference type="GO" id="GO:0005886">
    <property type="term" value="C:plasma membrane"/>
    <property type="evidence" value="ECO:0007669"/>
    <property type="project" value="UniProtKB-SubCell"/>
</dbReference>
<dbReference type="GO" id="GO:0045259">
    <property type="term" value="C:proton-transporting ATP synthase complex"/>
    <property type="evidence" value="ECO:0007669"/>
    <property type="project" value="UniProtKB-KW"/>
</dbReference>
<dbReference type="GO" id="GO:0005524">
    <property type="term" value="F:ATP binding"/>
    <property type="evidence" value="ECO:0007669"/>
    <property type="project" value="UniProtKB-UniRule"/>
</dbReference>
<dbReference type="GO" id="GO:0046933">
    <property type="term" value="F:proton-transporting ATP synthase activity, rotational mechanism"/>
    <property type="evidence" value="ECO:0007669"/>
    <property type="project" value="UniProtKB-UniRule"/>
</dbReference>
<dbReference type="CDD" id="cd12152">
    <property type="entry name" value="F1-ATPase_delta"/>
    <property type="match status" value="1"/>
</dbReference>
<dbReference type="FunFam" id="1.20.5.440:FF:000001">
    <property type="entry name" value="ATP synthase epsilon chain"/>
    <property type="match status" value="1"/>
</dbReference>
<dbReference type="FunFam" id="2.60.15.10:FF:000001">
    <property type="entry name" value="ATP synthase epsilon chain"/>
    <property type="match status" value="1"/>
</dbReference>
<dbReference type="Gene3D" id="1.20.5.440">
    <property type="entry name" value="ATP synthase delta/epsilon subunit, C-terminal domain"/>
    <property type="match status" value="1"/>
</dbReference>
<dbReference type="Gene3D" id="2.60.15.10">
    <property type="entry name" value="F0F1 ATP synthase delta/epsilon subunit, N-terminal"/>
    <property type="match status" value="1"/>
</dbReference>
<dbReference type="HAMAP" id="MF_00530">
    <property type="entry name" value="ATP_synth_epsil_bac"/>
    <property type="match status" value="1"/>
</dbReference>
<dbReference type="InterPro" id="IPR036794">
    <property type="entry name" value="ATP_F1_dsu/esu_C_sf"/>
</dbReference>
<dbReference type="InterPro" id="IPR001469">
    <property type="entry name" value="ATP_synth_F1_dsu/esu"/>
</dbReference>
<dbReference type="InterPro" id="IPR020546">
    <property type="entry name" value="ATP_synth_F1_dsu/esu_N"/>
</dbReference>
<dbReference type="InterPro" id="IPR020547">
    <property type="entry name" value="ATP_synth_F1_esu_C"/>
</dbReference>
<dbReference type="InterPro" id="IPR036771">
    <property type="entry name" value="ATPsynth_dsu/esu_N"/>
</dbReference>
<dbReference type="NCBIfam" id="TIGR01216">
    <property type="entry name" value="ATP_synt_epsi"/>
    <property type="match status" value="1"/>
</dbReference>
<dbReference type="NCBIfam" id="NF001847">
    <property type="entry name" value="PRK00571.1-4"/>
    <property type="match status" value="1"/>
</dbReference>
<dbReference type="PANTHER" id="PTHR13822">
    <property type="entry name" value="ATP SYNTHASE DELTA/EPSILON CHAIN"/>
    <property type="match status" value="1"/>
</dbReference>
<dbReference type="PANTHER" id="PTHR13822:SF10">
    <property type="entry name" value="ATP SYNTHASE EPSILON CHAIN, CHLOROPLASTIC"/>
    <property type="match status" value="1"/>
</dbReference>
<dbReference type="Pfam" id="PF00401">
    <property type="entry name" value="ATP-synt_DE"/>
    <property type="match status" value="1"/>
</dbReference>
<dbReference type="Pfam" id="PF02823">
    <property type="entry name" value="ATP-synt_DE_N"/>
    <property type="match status" value="1"/>
</dbReference>
<dbReference type="SUPFAM" id="SSF46604">
    <property type="entry name" value="Epsilon subunit of F1F0-ATP synthase C-terminal domain"/>
    <property type="match status" value="1"/>
</dbReference>
<dbReference type="SUPFAM" id="SSF51344">
    <property type="entry name" value="Epsilon subunit of F1F0-ATP synthase N-terminal domain"/>
    <property type="match status" value="1"/>
</dbReference>
<sequence>MSITTHLDIVSAEHEIFSGVVEMVVATGELGEIGITPGHAPLLTVLRPGEVRITLQGGTQDIYYVQGGMLEVQPHCVTILADVAERAEHLDEAAALAAKAKAEAAIASKGGDIDYSVAAAELARAVAQIRAIQKTRKKMK</sequence>